<evidence type="ECO:0000255" key="1">
    <source>
        <dbReference type="PROSITE-ProRule" id="PRU00175"/>
    </source>
</evidence>
<evidence type="ECO:0000255" key="2">
    <source>
        <dbReference type="PROSITE-ProRule" id="PRU00219"/>
    </source>
</evidence>
<evidence type="ECO:0000256" key="3">
    <source>
        <dbReference type="SAM" id="MobiDB-lite"/>
    </source>
</evidence>
<evidence type="ECO:0000269" key="4">
    <source>
    </source>
</evidence>
<evidence type="ECO:0000303" key="5">
    <source>
    </source>
</evidence>
<evidence type="ECO:0000305" key="6"/>
<evidence type="ECO:0000312" key="7">
    <source>
        <dbReference type="Araport" id="AT5G49665"/>
    </source>
</evidence>
<evidence type="ECO:0000312" key="8">
    <source>
        <dbReference type="EMBL" id="BAA98154.1"/>
    </source>
</evidence>
<dbReference type="EC" id="2.3.2.27" evidence="4"/>
<dbReference type="EMBL" id="AB251345">
    <property type="protein sequence ID" value="BAL15672.1"/>
    <property type="molecule type" value="Genomic_DNA"/>
</dbReference>
<dbReference type="EMBL" id="AB025613">
    <property type="protein sequence ID" value="BAA98154.1"/>
    <property type="molecule type" value="Genomic_DNA"/>
</dbReference>
<dbReference type="EMBL" id="CP002688">
    <property type="protein sequence ID" value="AED95843.1"/>
    <property type="molecule type" value="Genomic_DNA"/>
</dbReference>
<dbReference type="EMBL" id="BT000441">
    <property type="protein sequence ID" value="AAN17418.1"/>
    <property type="molecule type" value="mRNA"/>
</dbReference>
<dbReference type="EMBL" id="BT010337">
    <property type="protein sequence ID" value="AAQ56780.1"/>
    <property type="molecule type" value="mRNA"/>
</dbReference>
<dbReference type="EMBL" id="AK230140">
    <property type="protein sequence ID" value="BAF01954.1"/>
    <property type="molecule type" value="mRNA"/>
</dbReference>
<dbReference type="RefSeq" id="NP_680410.1">
    <property type="nucleotide sequence ID" value="NM_148105.3"/>
</dbReference>
<dbReference type="SMR" id="Q9LTA6"/>
<dbReference type="STRING" id="3702.Q9LTA6"/>
<dbReference type="iPTMnet" id="Q9LTA6"/>
<dbReference type="PaxDb" id="3702-AT5G49665.1"/>
<dbReference type="ProteomicsDB" id="242764"/>
<dbReference type="EnsemblPlants" id="AT5G49665.1">
    <property type="protein sequence ID" value="AT5G49665.1"/>
    <property type="gene ID" value="AT5G49665"/>
</dbReference>
<dbReference type="GeneID" id="835029"/>
<dbReference type="Gramene" id="AT5G49665.1">
    <property type="protein sequence ID" value="AT5G49665.1"/>
    <property type="gene ID" value="AT5G49665"/>
</dbReference>
<dbReference type="KEGG" id="ath:AT5G49665"/>
<dbReference type="Araport" id="AT5G49665"/>
<dbReference type="TAIR" id="AT5G49665"/>
<dbReference type="eggNOG" id="ENOG502QRQC">
    <property type="taxonomic scope" value="Eukaryota"/>
</dbReference>
<dbReference type="HOGENOM" id="CLU_006228_3_0_1"/>
<dbReference type="InParanoid" id="Q9LTA6"/>
<dbReference type="OMA" id="STCAMCL"/>
<dbReference type="PhylomeDB" id="Q9LTA6"/>
<dbReference type="PRO" id="PR:Q9LTA6"/>
<dbReference type="Proteomes" id="UP000006548">
    <property type="component" value="Chromosome 5"/>
</dbReference>
<dbReference type="ExpressionAtlas" id="Q9LTA6">
    <property type="expression patterns" value="baseline and differential"/>
</dbReference>
<dbReference type="GO" id="GO:0061630">
    <property type="term" value="F:ubiquitin protein ligase activity"/>
    <property type="evidence" value="ECO:0000314"/>
    <property type="project" value="UniProtKB"/>
</dbReference>
<dbReference type="GO" id="GO:0008270">
    <property type="term" value="F:zinc ion binding"/>
    <property type="evidence" value="ECO:0007669"/>
    <property type="project" value="UniProtKB-KW"/>
</dbReference>
<dbReference type="GO" id="GO:0009630">
    <property type="term" value="P:gravitropism"/>
    <property type="evidence" value="ECO:0000315"/>
    <property type="project" value="UniProtKB"/>
</dbReference>
<dbReference type="GO" id="GO:0010274">
    <property type="term" value="P:hydrotropism"/>
    <property type="evidence" value="ECO:0000315"/>
    <property type="project" value="TAIR"/>
</dbReference>
<dbReference type="GO" id="GO:0016567">
    <property type="term" value="P:protein ubiquitination"/>
    <property type="evidence" value="ECO:0000314"/>
    <property type="project" value="UniProtKB"/>
</dbReference>
<dbReference type="GO" id="GO:0048364">
    <property type="term" value="P:root development"/>
    <property type="evidence" value="ECO:0000315"/>
    <property type="project" value="UniProtKB"/>
</dbReference>
<dbReference type="FunFam" id="3.40.50.410:FF:000129">
    <property type="entry name" value="Probable E3 ubiquitin-protein ligase EDA40"/>
    <property type="match status" value="1"/>
</dbReference>
<dbReference type="Gene3D" id="3.40.50.410">
    <property type="entry name" value="von Willebrand factor, type A domain"/>
    <property type="match status" value="1"/>
</dbReference>
<dbReference type="Gene3D" id="3.30.40.10">
    <property type="entry name" value="Zinc/RING finger domain, C3HC4 (zinc finger)"/>
    <property type="match status" value="1"/>
</dbReference>
<dbReference type="InterPro" id="IPR051266">
    <property type="entry name" value="CLCR"/>
</dbReference>
<dbReference type="InterPro" id="IPR002035">
    <property type="entry name" value="VWF_A"/>
</dbReference>
<dbReference type="InterPro" id="IPR036465">
    <property type="entry name" value="vWFA_dom_sf"/>
</dbReference>
<dbReference type="InterPro" id="IPR001841">
    <property type="entry name" value="Znf_RING"/>
</dbReference>
<dbReference type="InterPro" id="IPR013083">
    <property type="entry name" value="Znf_RING/FYVE/PHD"/>
</dbReference>
<dbReference type="PANTHER" id="PTHR10579">
    <property type="entry name" value="CALCIUM-ACTIVATED CHLORIDE CHANNEL REGULATOR"/>
    <property type="match status" value="1"/>
</dbReference>
<dbReference type="PANTHER" id="PTHR10579:SF55">
    <property type="entry name" value="E3 UBIQUITIN-PROTEIN LIGASE WAV3"/>
    <property type="match status" value="1"/>
</dbReference>
<dbReference type="Pfam" id="PF13519">
    <property type="entry name" value="VWA_2"/>
    <property type="match status" value="1"/>
</dbReference>
<dbReference type="Pfam" id="PF25243">
    <property type="entry name" value="WAV3_C"/>
    <property type="match status" value="1"/>
</dbReference>
<dbReference type="Pfam" id="PF13639">
    <property type="entry name" value="zf-RING_2"/>
    <property type="match status" value="1"/>
</dbReference>
<dbReference type="SMART" id="SM00184">
    <property type="entry name" value="RING"/>
    <property type="match status" value="1"/>
</dbReference>
<dbReference type="SMART" id="SM00327">
    <property type="entry name" value="VWA"/>
    <property type="match status" value="1"/>
</dbReference>
<dbReference type="SUPFAM" id="SSF57850">
    <property type="entry name" value="RING/U-box"/>
    <property type="match status" value="1"/>
</dbReference>
<dbReference type="SUPFAM" id="SSF53300">
    <property type="entry name" value="vWA-like"/>
    <property type="match status" value="1"/>
</dbReference>
<dbReference type="PROSITE" id="PS50234">
    <property type="entry name" value="VWFA"/>
    <property type="match status" value="1"/>
</dbReference>
<dbReference type="PROSITE" id="PS50089">
    <property type="entry name" value="ZF_RING_2"/>
    <property type="match status" value="1"/>
</dbReference>
<gene>
    <name evidence="5" type="primary">WAV3</name>
    <name evidence="7" type="ordered locus">At5g49665</name>
    <name evidence="8" type="ORF">K2I5.2</name>
</gene>
<protein>
    <recommendedName>
        <fullName evidence="6">E3 ubiquitin-protein ligase WAV3</fullName>
        <ecNumber evidence="4">2.3.2.27</ecNumber>
    </recommendedName>
    <alternativeName>
        <fullName evidence="5">Protein WAVY GROWTH 3</fullName>
    </alternativeName>
    <alternativeName>
        <fullName evidence="6">RING-type E3 ubiquitin transferase WAV3</fullName>
    </alternativeName>
</protein>
<organism>
    <name type="scientific">Arabidopsis thaliana</name>
    <name type="common">Mouse-ear cress</name>
    <dbReference type="NCBI Taxonomy" id="3702"/>
    <lineage>
        <taxon>Eukaryota</taxon>
        <taxon>Viridiplantae</taxon>
        <taxon>Streptophyta</taxon>
        <taxon>Embryophyta</taxon>
        <taxon>Tracheophyta</taxon>
        <taxon>Spermatophyta</taxon>
        <taxon>Magnoliopsida</taxon>
        <taxon>eudicotyledons</taxon>
        <taxon>Gunneridae</taxon>
        <taxon>Pentapetalae</taxon>
        <taxon>rosids</taxon>
        <taxon>malvids</taxon>
        <taxon>Brassicales</taxon>
        <taxon>Brassicaceae</taxon>
        <taxon>Camelineae</taxon>
        <taxon>Arabidopsis</taxon>
    </lineage>
</organism>
<comment type="function">
    <text evidence="4">E3 ubiquitin-protein ligase involved in the regulation of root growth. Acts as a positive regulator of root gravitropism. Possesses E3 protein ligase activity in vitro.</text>
</comment>
<comment type="catalytic activity">
    <reaction evidence="4">
        <text>S-ubiquitinyl-[E2 ubiquitin-conjugating enzyme]-L-cysteine + [acceptor protein]-L-lysine = [E2 ubiquitin-conjugating enzyme]-L-cysteine + N(6)-ubiquitinyl-[acceptor protein]-L-lysine.</text>
        <dbReference type="EC" id="2.3.2.27"/>
    </reaction>
</comment>
<comment type="subunit">
    <text evidence="4">Interacts with SINAT1, SINAT2, SINAT3, SINAT4, SINAT5, TOR1/SPR2 and FIP2.</text>
</comment>
<comment type="tissue specificity">
    <text evidence="4">Expressed in root tips and leaf primordia.</text>
</comment>
<comment type="disruption phenotype">
    <text evidence="4">No visible phenotype under normal growth conditions, but mutant seedlings exhibit enhanced root wavy growth and curvature in response to gravitropism.</text>
</comment>
<feature type="chain" id="PRO_0000443504" description="E3 ubiquitin-protein ligase WAV3">
    <location>
        <begin position="1"/>
        <end position="740"/>
    </location>
</feature>
<feature type="domain" description="VWFA" evidence="2">
    <location>
        <begin position="332"/>
        <end position="476"/>
    </location>
</feature>
<feature type="zinc finger region" description="RING-type; atypical" evidence="1">
    <location>
        <begin position="122"/>
        <end position="167"/>
    </location>
</feature>
<feature type="region of interest" description="Disordered" evidence="3">
    <location>
        <begin position="14"/>
        <end position="105"/>
    </location>
</feature>
<feature type="region of interest" description="Disordered" evidence="3">
    <location>
        <begin position="677"/>
        <end position="709"/>
    </location>
</feature>
<feature type="compositionally biased region" description="Low complexity" evidence="3">
    <location>
        <begin position="49"/>
        <end position="67"/>
    </location>
</feature>
<feature type="compositionally biased region" description="Polar residues" evidence="3">
    <location>
        <begin position="71"/>
        <end position="90"/>
    </location>
</feature>
<sequence>MGTGWRRAFCTTAPRNSDAAAPDLDKQRTGYNLTPSPSPRSCVKLAFLSGGSNPSTPRSTSSPSLRCRTADAQTPTAEQTSTPRSATKSPRLSLAAISNPSSPRSPLKLSLFRNSFKFRSTCGICLNSVKTGQGTAKYTAECSHAFHFPCIADYVRKQGKLVCPVCNSIWKDASLLVPHKNATESPLDDSVSVIQEKRVVVTSSPRAKPRPKQSDYSRFYDDDEPLLSPRFVTIPEADENCGGEEEDDVPQFKGFVVDPNPSFAVKTNEIPVNGRDFGNVQVSLLPEAAVVSVGCGYETRAVALRVKAPPPLTARGGVGRRLLDPSQRAPVDLVVVVDVGGTMNGAKLQMVKRAMRLVISSLGSADRLSIVAVVMTVPKRLLPLKRMTEHGKRSAGAVVDGLLCGQGSNTSEALKKASRVLEDRRERNPVASIVLLTDGQGQLSKVHTNQRSTITNVGSTRFAHIEIPVTEHGFGESGGCSNAPAEEAFAKCIGGLLSVVVQDLRIQIRVGSGSGPCEISAIYLCNGRPTLVSSGSGSVRLGDLYAGEERELLVELRVPSTATRAYQILSVRGLFKDPSTQEVVYGRDQSLRVPQAVRSSSSPRIERLRSLFIATRAVAESRRLVEYGECTSAYHLLTSARALLGQSGTVEAAEYIKVVEAELVEVQWRGQQLMEYQSQHQQQHNQRRRGSERETTTTMTLMDENGEPLTPASAWRAAEKLAKLAMMKKSDLHGFENARF</sequence>
<proteinExistence type="evidence at protein level"/>
<keyword id="KW-0479">Metal-binding</keyword>
<keyword id="KW-1185">Reference proteome</keyword>
<keyword id="KW-0808">Transferase</keyword>
<keyword id="KW-0833">Ubl conjugation pathway</keyword>
<keyword id="KW-0862">Zinc</keyword>
<keyword id="KW-0863">Zinc-finger</keyword>
<reference key="1">
    <citation type="journal article" date="2012" name="Plant J.">
        <title>The wavy growth 3 E3 ligase family controls the gravitropic response in Arabidopsis roots.</title>
        <authorList>
            <person name="Sakai T."/>
            <person name="Mochizuki S."/>
            <person name="Haga K."/>
            <person name="Uehara Y."/>
            <person name="Suzuki A."/>
            <person name="Harada A."/>
            <person name="Wada T."/>
            <person name="Ishiguro S."/>
            <person name="Okada K."/>
        </authorList>
    </citation>
    <scope>NUCLEOTIDE SEQUENCE [GENOMIC DNA]</scope>
    <scope>FUNCTION</scope>
    <scope>CATALYTIC ACTIVITY</scope>
    <scope>INTERACTION WITH SINAT1; SINAT2; SINAT3; SINAT4; SINAT5; TOR1/SPR2 AND FIP2</scope>
    <scope>TISSUE SPECIFICITY</scope>
    <scope>DISRUPTION PHENOTYPE</scope>
    <source>
        <strain>cv. Landsberg erecta</strain>
    </source>
</reference>
<reference key="2">
    <citation type="submission" date="1999-04" db="EMBL/GenBank/DDBJ databases">
        <title>Structural analysis of Arabidopsis thaliana chromosome 5. XI.</title>
        <authorList>
            <person name="Kaneko T."/>
            <person name="Katoh T."/>
            <person name="Asamizu E."/>
            <person name="Sato S."/>
            <person name="Nakamura Y."/>
            <person name="Kotani H."/>
            <person name="Tabata S."/>
        </authorList>
    </citation>
    <scope>NUCLEOTIDE SEQUENCE [LARGE SCALE GENOMIC DNA]</scope>
    <source>
        <strain>cv. Columbia</strain>
    </source>
</reference>
<reference key="3">
    <citation type="journal article" date="2017" name="Plant J.">
        <title>Araport11: a complete reannotation of the Arabidopsis thaliana reference genome.</title>
        <authorList>
            <person name="Cheng C.Y."/>
            <person name="Krishnakumar V."/>
            <person name="Chan A.P."/>
            <person name="Thibaud-Nissen F."/>
            <person name="Schobel S."/>
            <person name="Town C.D."/>
        </authorList>
    </citation>
    <scope>GENOME REANNOTATION</scope>
    <source>
        <strain>cv. Columbia</strain>
    </source>
</reference>
<reference key="4">
    <citation type="journal article" date="2003" name="Science">
        <title>Empirical analysis of transcriptional activity in the Arabidopsis genome.</title>
        <authorList>
            <person name="Yamada K."/>
            <person name="Lim J."/>
            <person name="Dale J.M."/>
            <person name="Chen H."/>
            <person name="Shinn P."/>
            <person name="Palm C.J."/>
            <person name="Southwick A.M."/>
            <person name="Wu H.C."/>
            <person name="Kim C.J."/>
            <person name="Nguyen M."/>
            <person name="Pham P.K."/>
            <person name="Cheuk R.F."/>
            <person name="Karlin-Newmann G."/>
            <person name="Liu S.X."/>
            <person name="Lam B."/>
            <person name="Sakano H."/>
            <person name="Wu T."/>
            <person name="Yu G."/>
            <person name="Miranda M."/>
            <person name="Quach H.L."/>
            <person name="Tripp M."/>
            <person name="Chang C.H."/>
            <person name="Lee J.M."/>
            <person name="Toriumi M.J."/>
            <person name="Chan M.M."/>
            <person name="Tang C.C."/>
            <person name="Onodera C.S."/>
            <person name="Deng J.M."/>
            <person name="Akiyama K."/>
            <person name="Ansari Y."/>
            <person name="Arakawa T."/>
            <person name="Banh J."/>
            <person name="Banno F."/>
            <person name="Bowser L."/>
            <person name="Brooks S.Y."/>
            <person name="Carninci P."/>
            <person name="Chao Q."/>
            <person name="Choy N."/>
            <person name="Enju A."/>
            <person name="Goldsmith A.D."/>
            <person name="Gurjal M."/>
            <person name="Hansen N.F."/>
            <person name="Hayashizaki Y."/>
            <person name="Johnson-Hopson C."/>
            <person name="Hsuan V.W."/>
            <person name="Iida K."/>
            <person name="Karnes M."/>
            <person name="Khan S."/>
            <person name="Koesema E."/>
            <person name="Ishida J."/>
            <person name="Jiang P.X."/>
            <person name="Jones T."/>
            <person name="Kawai J."/>
            <person name="Kamiya A."/>
            <person name="Meyers C."/>
            <person name="Nakajima M."/>
            <person name="Narusaka M."/>
            <person name="Seki M."/>
            <person name="Sakurai T."/>
            <person name="Satou M."/>
            <person name="Tamse R."/>
            <person name="Vaysberg M."/>
            <person name="Wallender E.K."/>
            <person name="Wong C."/>
            <person name="Yamamura Y."/>
            <person name="Yuan S."/>
            <person name="Shinozaki K."/>
            <person name="Davis R.W."/>
            <person name="Theologis A."/>
            <person name="Ecker J.R."/>
        </authorList>
    </citation>
    <scope>NUCLEOTIDE SEQUENCE [LARGE SCALE MRNA]</scope>
    <source>
        <strain>cv. Columbia</strain>
    </source>
</reference>
<reference key="5">
    <citation type="submission" date="2006-07" db="EMBL/GenBank/DDBJ databases">
        <title>Large-scale analysis of RIKEN Arabidopsis full-length (RAFL) cDNAs.</title>
        <authorList>
            <person name="Totoki Y."/>
            <person name="Seki M."/>
            <person name="Ishida J."/>
            <person name="Nakajima M."/>
            <person name="Enju A."/>
            <person name="Kamiya A."/>
            <person name="Narusaka M."/>
            <person name="Shin-i T."/>
            <person name="Nakagawa M."/>
            <person name="Sakamoto N."/>
            <person name="Oishi K."/>
            <person name="Kohara Y."/>
            <person name="Kobayashi M."/>
            <person name="Toyoda A."/>
            <person name="Sakaki Y."/>
            <person name="Sakurai T."/>
            <person name="Iida K."/>
            <person name="Akiyama K."/>
            <person name="Satou M."/>
            <person name="Toyoda T."/>
            <person name="Konagaya A."/>
            <person name="Carninci P."/>
            <person name="Kawai J."/>
            <person name="Hayashizaki Y."/>
            <person name="Shinozaki K."/>
        </authorList>
    </citation>
    <scope>NUCLEOTIDE SEQUENCE [LARGE SCALE MRNA] OF 305-740</scope>
    <source>
        <strain>cv. Columbia</strain>
    </source>
</reference>
<name>WAV3_ARATH</name>
<accession>Q9LTA6</accession>
<accession>Q0WLQ3</accession>